<gene>
    <name type="ORF">GH22027</name>
</gene>
<organism>
    <name type="scientific">Drosophila grimshawi</name>
    <name type="common">Hawaiian fruit fly</name>
    <name type="synonym">Idiomyia grimshawi</name>
    <dbReference type="NCBI Taxonomy" id="7222"/>
    <lineage>
        <taxon>Eukaryota</taxon>
        <taxon>Metazoa</taxon>
        <taxon>Ecdysozoa</taxon>
        <taxon>Arthropoda</taxon>
        <taxon>Hexapoda</taxon>
        <taxon>Insecta</taxon>
        <taxon>Pterygota</taxon>
        <taxon>Neoptera</taxon>
        <taxon>Endopterygota</taxon>
        <taxon>Diptera</taxon>
        <taxon>Brachycera</taxon>
        <taxon>Muscomorpha</taxon>
        <taxon>Ephydroidea</taxon>
        <taxon>Drosophilidae</taxon>
        <taxon>Drosophila</taxon>
        <taxon>Hawaiian Drosophila</taxon>
    </lineage>
</organism>
<reference key="1">
    <citation type="journal article" date="2007" name="Nature">
        <title>Evolution of genes and genomes on the Drosophila phylogeny.</title>
        <authorList>
            <consortium name="Drosophila 12 genomes consortium"/>
        </authorList>
    </citation>
    <scope>NUCLEOTIDE SEQUENCE [LARGE SCALE GENOMIC DNA]</scope>
    <source>
        <strain>Tucson 15287-2541.00</strain>
    </source>
</reference>
<accession>B4J9K1</accession>
<feature type="chain" id="PRO_0000370396" description="Ribosome biogenesis protein BOP1 homolog">
    <location>
        <begin position="1"/>
        <end position="786"/>
    </location>
</feature>
<feature type="repeat" description="WD 1">
    <location>
        <begin position="447"/>
        <end position="488"/>
    </location>
</feature>
<feature type="repeat" description="WD 2">
    <location>
        <begin position="490"/>
        <end position="528"/>
    </location>
</feature>
<feature type="repeat" description="WD 3">
    <location>
        <begin position="572"/>
        <end position="614"/>
    </location>
</feature>
<feature type="repeat" description="WD 4">
    <location>
        <begin position="617"/>
        <end position="655"/>
    </location>
</feature>
<feature type="repeat" description="WD 5">
    <location>
        <begin position="658"/>
        <end position="697"/>
    </location>
</feature>
<feature type="repeat" description="WD 6">
    <location>
        <begin position="701"/>
        <end position="740"/>
    </location>
</feature>
<feature type="repeat" description="WD 7">
    <location>
        <begin position="756"/>
        <end position="786"/>
    </location>
</feature>
<feature type="region of interest" description="Disordered" evidence="2">
    <location>
        <begin position="1"/>
        <end position="161"/>
    </location>
</feature>
<feature type="compositionally biased region" description="Basic residues" evidence="2">
    <location>
        <begin position="1"/>
        <end position="11"/>
    </location>
</feature>
<feature type="compositionally biased region" description="Polar residues" evidence="2">
    <location>
        <begin position="17"/>
        <end position="26"/>
    </location>
</feature>
<feature type="compositionally biased region" description="Acidic residues" evidence="2">
    <location>
        <begin position="44"/>
        <end position="53"/>
    </location>
</feature>
<feature type="compositionally biased region" description="Acidic residues" evidence="2">
    <location>
        <begin position="60"/>
        <end position="72"/>
    </location>
</feature>
<feature type="compositionally biased region" description="Acidic residues" evidence="2">
    <location>
        <begin position="82"/>
        <end position="114"/>
    </location>
</feature>
<feature type="compositionally biased region" description="Polar residues" evidence="2">
    <location>
        <begin position="122"/>
        <end position="135"/>
    </location>
</feature>
<feature type="compositionally biased region" description="Basic and acidic residues" evidence="2">
    <location>
        <begin position="141"/>
        <end position="150"/>
    </location>
</feature>
<feature type="compositionally biased region" description="Acidic residues" evidence="2">
    <location>
        <begin position="151"/>
        <end position="160"/>
    </location>
</feature>
<name>BOP1_DROGR</name>
<keyword id="KW-0539">Nucleus</keyword>
<keyword id="KW-1185">Reference proteome</keyword>
<keyword id="KW-0677">Repeat</keyword>
<keyword id="KW-0690">Ribosome biogenesis</keyword>
<keyword id="KW-0698">rRNA processing</keyword>
<keyword id="KW-0853">WD repeat</keyword>
<sequence>MAKKSAIKRKVKAPESINEQASVSEQSENEEDEDLLQAVKDPGEDTTDDEGIDQEYQSDTSDDLLFESDEEGNYLGRKEASSGEDEQGEEDDNDDEEEEDEDEEESGSSDDDAKDDQPSGSKATLSKTTGDSSNIAVAIPPRRDPSKPEYENSDTSDEEDIRNTVGNIPMHWYDEYKHIGYDWDAKKIIKPPKGDQIDDFLRKIEDPDFWRTVKDPQTGQEVLLTDEDIALIKRVNSARIPNPEHNEYEPWIEWFSSQVEKMPIKNVPDHKRSFLPSVSEKKKVSRMVHALKMGWMKTTEEVERDKQQKRGPKFYMLWETDTGREHIRRIHDPVSAPKRDLPGHAESYNPPPEYLFDAKEMKEWLKYKDEPHKRKLHFMPQKFKSLREVPAYSRFLRERFLRCLDLYLCPRAKRVKLNIDAEYLIPKLPSPRDLQPFPTVESLVYRGHTDLVRSVSVEPKGEYIVSGSDDKTVKIWEIATGRCIRTIETNDVVRCVAWCPNAKLSIIAVATGTRLLLINPKVGDKLLVKKTDDLLAEAPSSDVIESERIKTAVQWSNAEPEEQEKGVRVVITHFKPIRQVTWHGRGDYLATVMPEGANRSALIHQLSKRRSQIPFSKSKGLIQCVLFHPVKPCFFVATQHNIRIYDLVKQELIKKLLTNSKWISGMSIHPKGDNLLVSTYDKKMLWFDLDLSTKPYQTMRLHRNAVRSIAFHLRYPLFASGSDDQAVIVSHGMVYNDLLQNPLIVPLKKLQTHEKRDEFGVLDVNWHPVQPWIFSTGADCTIRLYT</sequence>
<dbReference type="EMBL" id="CH916367">
    <property type="protein sequence ID" value="EDW02508.1"/>
    <property type="molecule type" value="Genomic_DNA"/>
</dbReference>
<dbReference type="SMR" id="B4J9K1"/>
<dbReference type="FunCoup" id="B4J9K1">
    <property type="interactions" value="1333"/>
</dbReference>
<dbReference type="STRING" id="7222.B4J9K1"/>
<dbReference type="EnsemblMetazoa" id="FBtr0157441">
    <property type="protein sequence ID" value="FBpp0155933"/>
    <property type="gene ID" value="FBgn0129488"/>
</dbReference>
<dbReference type="EnsemblMetazoa" id="XM_001987605.2">
    <property type="protein sequence ID" value="XP_001987641.1"/>
    <property type="gene ID" value="LOC6559538"/>
</dbReference>
<dbReference type="GeneID" id="6559538"/>
<dbReference type="KEGG" id="dgr:6559538"/>
<dbReference type="eggNOG" id="KOG0650">
    <property type="taxonomic scope" value="Eukaryota"/>
</dbReference>
<dbReference type="HOGENOM" id="CLU_011390_0_1_1"/>
<dbReference type="InParanoid" id="B4J9K1"/>
<dbReference type="OMA" id="MRPAKGE"/>
<dbReference type="OrthoDB" id="5571054at2759"/>
<dbReference type="PhylomeDB" id="B4J9K1"/>
<dbReference type="Proteomes" id="UP000001070">
    <property type="component" value="Unassembled WGS sequence"/>
</dbReference>
<dbReference type="GO" id="GO:0005654">
    <property type="term" value="C:nucleoplasm"/>
    <property type="evidence" value="ECO:0007669"/>
    <property type="project" value="UniProtKB-SubCell"/>
</dbReference>
<dbReference type="GO" id="GO:0070545">
    <property type="term" value="C:PeBoW complex"/>
    <property type="evidence" value="ECO:0007669"/>
    <property type="project" value="TreeGrafter"/>
</dbReference>
<dbReference type="GO" id="GO:0030687">
    <property type="term" value="C:preribosome, large subunit precursor"/>
    <property type="evidence" value="ECO:0007669"/>
    <property type="project" value="UniProtKB-UniRule"/>
</dbReference>
<dbReference type="GO" id="GO:0043021">
    <property type="term" value="F:ribonucleoprotein complex binding"/>
    <property type="evidence" value="ECO:0007669"/>
    <property type="project" value="UniProtKB-UniRule"/>
</dbReference>
<dbReference type="GO" id="GO:0000466">
    <property type="term" value="P:maturation of 5.8S rRNA from tricistronic rRNA transcript (SSU-rRNA, 5.8S rRNA, LSU-rRNA)"/>
    <property type="evidence" value="ECO:0007669"/>
    <property type="project" value="UniProtKB-UniRule"/>
</dbReference>
<dbReference type="GO" id="GO:0000463">
    <property type="term" value="P:maturation of LSU-rRNA from tricistronic rRNA transcript (SSU-rRNA, 5.8S rRNA, LSU-rRNA)"/>
    <property type="evidence" value="ECO:0007669"/>
    <property type="project" value="UniProtKB-UniRule"/>
</dbReference>
<dbReference type="GO" id="GO:0035206">
    <property type="term" value="P:regulation of hemocyte proliferation"/>
    <property type="evidence" value="ECO:0007669"/>
    <property type="project" value="EnsemblMetazoa"/>
</dbReference>
<dbReference type="CDD" id="cd00200">
    <property type="entry name" value="WD40"/>
    <property type="match status" value="1"/>
</dbReference>
<dbReference type="FunFam" id="2.130.10.10:FF:000061">
    <property type="entry name" value="Ribosome biogenesis protein BOP1 homolog"/>
    <property type="match status" value="1"/>
</dbReference>
<dbReference type="Gene3D" id="2.130.10.10">
    <property type="entry name" value="YVTN repeat-like/Quinoprotein amine dehydrogenase"/>
    <property type="match status" value="1"/>
</dbReference>
<dbReference type="HAMAP" id="MF_03027">
    <property type="entry name" value="BOP1"/>
    <property type="match status" value="1"/>
</dbReference>
<dbReference type="InterPro" id="IPR028598">
    <property type="entry name" value="BOP1/Erb1"/>
</dbReference>
<dbReference type="InterPro" id="IPR012953">
    <property type="entry name" value="BOP1_N_dom"/>
</dbReference>
<dbReference type="InterPro" id="IPR015943">
    <property type="entry name" value="WD40/YVTN_repeat-like_dom_sf"/>
</dbReference>
<dbReference type="InterPro" id="IPR019775">
    <property type="entry name" value="WD40_repeat_CS"/>
</dbReference>
<dbReference type="InterPro" id="IPR036322">
    <property type="entry name" value="WD40_repeat_dom_sf"/>
</dbReference>
<dbReference type="InterPro" id="IPR001680">
    <property type="entry name" value="WD40_rpt"/>
</dbReference>
<dbReference type="PANTHER" id="PTHR17605:SF0">
    <property type="entry name" value="RIBOSOME BIOGENESIS PROTEIN BOP1"/>
    <property type="match status" value="1"/>
</dbReference>
<dbReference type="PANTHER" id="PTHR17605">
    <property type="entry name" value="RIBOSOME BIOGENESIS PROTEIN BOP1 BLOCK OF PROLIFERATION 1 PROTEIN"/>
    <property type="match status" value="1"/>
</dbReference>
<dbReference type="Pfam" id="PF08145">
    <property type="entry name" value="BOP1NT"/>
    <property type="match status" value="1"/>
</dbReference>
<dbReference type="Pfam" id="PF00400">
    <property type="entry name" value="WD40"/>
    <property type="match status" value="3"/>
</dbReference>
<dbReference type="SMART" id="SM01035">
    <property type="entry name" value="BOP1NT"/>
    <property type="match status" value="1"/>
</dbReference>
<dbReference type="SMART" id="SM00320">
    <property type="entry name" value="WD40"/>
    <property type="match status" value="7"/>
</dbReference>
<dbReference type="SUPFAM" id="SSF50978">
    <property type="entry name" value="WD40 repeat-like"/>
    <property type="match status" value="1"/>
</dbReference>
<dbReference type="PROSITE" id="PS00678">
    <property type="entry name" value="WD_REPEATS_1"/>
    <property type="match status" value="1"/>
</dbReference>
<dbReference type="PROSITE" id="PS50082">
    <property type="entry name" value="WD_REPEATS_2"/>
    <property type="match status" value="1"/>
</dbReference>
<dbReference type="PROSITE" id="PS50294">
    <property type="entry name" value="WD_REPEATS_REGION"/>
    <property type="match status" value="2"/>
</dbReference>
<protein>
    <recommendedName>
        <fullName evidence="1">Ribosome biogenesis protein BOP1 homolog</fullName>
    </recommendedName>
</protein>
<comment type="function">
    <text evidence="1">Required for maturation of ribosomal RNAs and formation of the large ribosomal subunit.</text>
</comment>
<comment type="subcellular location">
    <subcellularLocation>
        <location evidence="1">Nucleus</location>
        <location evidence="1">Nucleolus</location>
    </subcellularLocation>
    <subcellularLocation>
        <location evidence="1">Nucleus</location>
        <location evidence="1">Nucleoplasm</location>
    </subcellularLocation>
</comment>
<comment type="similarity">
    <text evidence="1">Belongs to the WD repeat BOP1/ERB1 family.</text>
</comment>
<evidence type="ECO:0000255" key="1">
    <source>
        <dbReference type="HAMAP-Rule" id="MF_03027"/>
    </source>
</evidence>
<evidence type="ECO:0000256" key="2">
    <source>
        <dbReference type="SAM" id="MobiDB-lite"/>
    </source>
</evidence>
<proteinExistence type="inferred from homology"/>